<comment type="function">
    <text evidence="1">RuBisCO catalyzes two reactions: the carboxylation of D-ribulose 1,5-bisphosphate, the primary event in carbon dioxide fixation, as well as the oxidative fragmentation of the pentose substrate in the photorespiration process. Both reactions occur simultaneously and in competition at the same active site.</text>
</comment>
<comment type="catalytic activity">
    <reaction evidence="1">
        <text>2 (2R)-3-phosphoglycerate + 2 H(+) = D-ribulose 1,5-bisphosphate + CO2 + H2O</text>
        <dbReference type="Rhea" id="RHEA:23124"/>
        <dbReference type="ChEBI" id="CHEBI:15377"/>
        <dbReference type="ChEBI" id="CHEBI:15378"/>
        <dbReference type="ChEBI" id="CHEBI:16526"/>
        <dbReference type="ChEBI" id="CHEBI:57870"/>
        <dbReference type="ChEBI" id="CHEBI:58272"/>
        <dbReference type="EC" id="4.1.1.39"/>
    </reaction>
</comment>
<comment type="catalytic activity">
    <reaction evidence="1">
        <text>D-ribulose 1,5-bisphosphate + O2 = 2-phosphoglycolate + (2R)-3-phosphoglycerate + 2 H(+)</text>
        <dbReference type="Rhea" id="RHEA:36631"/>
        <dbReference type="ChEBI" id="CHEBI:15378"/>
        <dbReference type="ChEBI" id="CHEBI:15379"/>
        <dbReference type="ChEBI" id="CHEBI:57870"/>
        <dbReference type="ChEBI" id="CHEBI:58033"/>
        <dbReference type="ChEBI" id="CHEBI:58272"/>
    </reaction>
</comment>
<comment type="cofactor">
    <cofactor evidence="1">
        <name>Mg(2+)</name>
        <dbReference type="ChEBI" id="CHEBI:18420"/>
    </cofactor>
    <text evidence="1">Binds 1 Mg(2+) ion per subunit.</text>
</comment>
<comment type="subunit">
    <text evidence="1">Heterohexadecamer of 8 large chains and 8 small chains; disulfide-linked. The disulfide link is formed within the large subunit homodimers.</text>
</comment>
<comment type="subcellular location">
    <subcellularLocation>
        <location>Plastid</location>
        <location>Chloroplast</location>
    </subcellularLocation>
</comment>
<comment type="PTM">
    <text evidence="1">The disulfide bond which can form in the large chain dimeric partners within the hexadecamer appears to be associated with oxidative stress and protein turnover.</text>
</comment>
<comment type="miscellaneous">
    <text evidence="1">The basic functional RuBisCO is composed of a large chain homodimer in a 'head-to-tail' conformation. In form I RuBisCO this homodimer is arranged in a barrel-like tetramer with the small subunits forming a tetrameric 'cap' on each end of the 'barrel'.</text>
</comment>
<comment type="similarity">
    <text evidence="1">Belongs to the RuBisCO large chain family. Type I subfamily.</text>
</comment>
<name>RBL_LUPMU</name>
<reference key="1">
    <citation type="journal article" date="1995" name="Bot. Acta">
        <title>Molecular phylogeny of the Papilionoideae (family Leguminosae): rbcL sequences versus chemical taxonomy.</title>
        <authorList>
            <person name="Kaess E."/>
            <person name="Wink M."/>
        </authorList>
    </citation>
    <scope>NUCLEOTIDE SEQUENCE [GENOMIC DNA]</scope>
    <source>
        <tissue>Leaf</tissue>
    </source>
</reference>
<evidence type="ECO:0000255" key="1">
    <source>
        <dbReference type="HAMAP-Rule" id="MF_01338"/>
    </source>
</evidence>
<gene>
    <name evidence="1" type="primary">rbcL</name>
</gene>
<keyword id="KW-0113">Calvin cycle</keyword>
<keyword id="KW-0120">Carbon dioxide fixation</keyword>
<keyword id="KW-0150">Chloroplast</keyword>
<keyword id="KW-1015">Disulfide bond</keyword>
<keyword id="KW-0456">Lyase</keyword>
<keyword id="KW-0460">Magnesium</keyword>
<keyword id="KW-0479">Metal-binding</keyword>
<keyword id="KW-0488">Methylation</keyword>
<keyword id="KW-0503">Monooxygenase</keyword>
<keyword id="KW-0560">Oxidoreductase</keyword>
<keyword id="KW-0601">Photorespiration</keyword>
<keyword id="KW-0602">Photosynthesis</keyword>
<keyword id="KW-0934">Plastid</keyword>
<accession>P69585</accession>
<accession>P52773</accession>
<accession>P52774</accession>
<feature type="chain" id="PRO_0000062521" description="Ribulose bisphosphate carboxylase large chain">
    <location>
        <begin position="1" status="less than"/>
        <end position="455" status="greater than"/>
    </location>
</feature>
<feature type="active site" description="Proton acceptor" evidence="1">
    <location>
        <position position="166"/>
    </location>
</feature>
<feature type="active site" description="Proton acceptor" evidence="1">
    <location>
        <position position="285"/>
    </location>
</feature>
<feature type="binding site" description="in homodimeric partner" evidence="1">
    <location>
        <position position="114"/>
    </location>
    <ligand>
        <name>substrate</name>
    </ligand>
</feature>
<feature type="binding site" evidence="1">
    <location>
        <position position="164"/>
    </location>
    <ligand>
        <name>substrate</name>
    </ligand>
</feature>
<feature type="binding site" evidence="1">
    <location>
        <position position="168"/>
    </location>
    <ligand>
        <name>substrate</name>
    </ligand>
</feature>
<feature type="binding site" description="via carbamate group" evidence="1">
    <location>
        <position position="192"/>
    </location>
    <ligand>
        <name>Mg(2+)</name>
        <dbReference type="ChEBI" id="CHEBI:18420"/>
    </ligand>
</feature>
<feature type="binding site" evidence="1">
    <location>
        <position position="194"/>
    </location>
    <ligand>
        <name>Mg(2+)</name>
        <dbReference type="ChEBI" id="CHEBI:18420"/>
    </ligand>
</feature>
<feature type="binding site" evidence="1">
    <location>
        <position position="195"/>
    </location>
    <ligand>
        <name>Mg(2+)</name>
        <dbReference type="ChEBI" id="CHEBI:18420"/>
    </ligand>
</feature>
<feature type="binding site" evidence="1">
    <location>
        <position position="286"/>
    </location>
    <ligand>
        <name>substrate</name>
    </ligand>
</feature>
<feature type="binding site" evidence="1">
    <location>
        <position position="318"/>
    </location>
    <ligand>
        <name>substrate</name>
    </ligand>
</feature>
<feature type="binding site" evidence="1">
    <location>
        <position position="370"/>
    </location>
    <ligand>
        <name>substrate</name>
    </ligand>
</feature>
<feature type="site" description="Transition state stabilizer" evidence="1">
    <location>
        <position position="325"/>
    </location>
</feature>
<feature type="modified residue" description="N6,N6,N6-trimethyllysine" evidence="1">
    <location>
        <position position="5"/>
    </location>
</feature>
<feature type="modified residue" description="N6-carboxylysine" evidence="1">
    <location>
        <position position="192"/>
    </location>
</feature>
<feature type="disulfide bond" description="Interchain; in linked form" evidence="1">
    <location>
        <position position="238"/>
    </location>
</feature>
<feature type="non-terminal residue">
    <location>
        <position position="1"/>
    </location>
</feature>
<feature type="non-terminal residue">
    <location>
        <position position="455"/>
    </location>
</feature>
<protein>
    <recommendedName>
        <fullName evidence="1">Ribulose bisphosphate carboxylase large chain</fullName>
        <shortName evidence="1">RuBisCO large subunit</shortName>
        <ecNumber evidence="1">4.1.1.39</ecNumber>
    </recommendedName>
</protein>
<organism>
    <name type="scientific">Lupinus mutabilis</name>
    <name type="common">Pearl lupine</name>
    <name type="synonym">Lupinus cruckshanksii</name>
    <dbReference type="NCBI Taxonomy" id="53232"/>
    <lineage>
        <taxon>Eukaryota</taxon>
        <taxon>Viridiplantae</taxon>
        <taxon>Streptophyta</taxon>
        <taxon>Embryophyta</taxon>
        <taxon>Tracheophyta</taxon>
        <taxon>Spermatophyta</taxon>
        <taxon>Magnoliopsida</taxon>
        <taxon>eudicotyledons</taxon>
        <taxon>Gunneridae</taxon>
        <taxon>Pentapetalae</taxon>
        <taxon>rosids</taxon>
        <taxon>fabids</taxon>
        <taxon>Fabales</taxon>
        <taxon>Fabaceae</taxon>
        <taxon>Papilionoideae</taxon>
        <taxon>50 kb inversion clade</taxon>
        <taxon>genistoids sensu lato</taxon>
        <taxon>core genistoids</taxon>
        <taxon>Genisteae</taxon>
        <taxon>Lupinus</taxon>
    </lineage>
</organism>
<geneLocation type="chloroplast"/>
<proteinExistence type="inferred from homology"/>
<dbReference type="EC" id="4.1.1.39" evidence="1"/>
<dbReference type="EMBL" id="Z70061">
    <property type="protein sequence ID" value="CAA93920.1"/>
    <property type="molecule type" value="Genomic_DNA"/>
</dbReference>
<dbReference type="SMR" id="P69585"/>
<dbReference type="GO" id="GO:0009507">
    <property type="term" value="C:chloroplast"/>
    <property type="evidence" value="ECO:0007669"/>
    <property type="project" value="UniProtKB-SubCell"/>
</dbReference>
<dbReference type="GO" id="GO:0000287">
    <property type="term" value="F:magnesium ion binding"/>
    <property type="evidence" value="ECO:0007669"/>
    <property type="project" value="InterPro"/>
</dbReference>
<dbReference type="GO" id="GO:0004497">
    <property type="term" value="F:monooxygenase activity"/>
    <property type="evidence" value="ECO:0007669"/>
    <property type="project" value="UniProtKB-KW"/>
</dbReference>
<dbReference type="GO" id="GO:0016984">
    <property type="term" value="F:ribulose-bisphosphate carboxylase activity"/>
    <property type="evidence" value="ECO:0007669"/>
    <property type="project" value="UniProtKB-EC"/>
</dbReference>
<dbReference type="GO" id="GO:0009853">
    <property type="term" value="P:photorespiration"/>
    <property type="evidence" value="ECO:0007669"/>
    <property type="project" value="UniProtKB-KW"/>
</dbReference>
<dbReference type="GO" id="GO:0019253">
    <property type="term" value="P:reductive pentose-phosphate cycle"/>
    <property type="evidence" value="ECO:0007669"/>
    <property type="project" value="UniProtKB-KW"/>
</dbReference>
<dbReference type="CDD" id="cd08212">
    <property type="entry name" value="RuBisCO_large_I"/>
    <property type="match status" value="1"/>
</dbReference>
<dbReference type="FunFam" id="3.20.20.110:FF:000001">
    <property type="entry name" value="Ribulose bisphosphate carboxylase large chain"/>
    <property type="match status" value="1"/>
</dbReference>
<dbReference type="FunFam" id="3.30.70.150:FF:000001">
    <property type="entry name" value="Ribulose bisphosphate carboxylase large chain"/>
    <property type="match status" value="1"/>
</dbReference>
<dbReference type="Gene3D" id="3.20.20.110">
    <property type="entry name" value="Ribulose bisphosphate carboxylase, large subunit, C-terminal domain"/>
    <property type="match status" value="1"/>
</dbReference>
<dbReference type="Gene3D" id="3.30.70.150">
    <property type="entry name" value="RuBisCO large subunit, N-terminal domain"/>
    <property type="match status" value="1"/>
</dbReference>
<dbReference type="HAMAP" id="MF_01338">
    <property type="entry name" value="RuBisCO_L_type1"/>
    <property type="match status" value="1"/>
</dbReference>
<dbReference type="InterPro" id="IPR033966">
    <property type="entry name" value="RuBisCO"/>
</dbReference>
<dbReference type="InterPro" id="IPR020878">
    <property type="entry name" value="RuBisCo_large_chain_AS"/>
</dbReference>
<dbReference type="InterPro" id="IPR000685">
    <property type="entry name" value="RuBisCO_lsu_C"/>
</dbReference>
<dbReference type="InterPro" id="IPR036376">
    <property type="entry name" value="RuBisCO_lsu_C_sf"/>
</dbReference>
<dbReference type="InterPro" id="IPR017443">
    <property type="entry name" value="RuBisCO_lsu_fd_N"/>
</dbReference>
<dbReference type="InterPro" id="IPR036422">
    <property type="entry name" value="RuBisCO_lsu_N_sf"/>
</dbReference>
<dbReference type="InterPro" id="IPR020888">
    <property type="entry name" value="RuBisCO_lsuI"/>
</dbReference>
<dbReference type="NCBIfam" id="NF003252">
    <property type="entry name" value="PRK04208.1"/>
    <property type="match status" value="1"/>
</dbReference>
<dbReference type="PANTHER" id="PTHR42704">
    <property type="entry name" value="RIBULOSE BISPHOSPHATE CARBOXYLASE"/>
    <property type="match status" value="1"/>
</dbReference>
<dbReference type="PANTHER" id="PTHR42704:SF16">
    <property type="entry name" value="RIBULOSE BISPHOSPHATE CARBOXYLASE LARGE CHAIN"/>
    <property type="match status" value="1"/>
</dbReference>
<dbReference type="Pfam" id="PF00016">
    <property type="entry name" value="RuBisCO_large"/>
    <property type="match status" value="1"/>
</dbReference>
<dbReference type="Pfam" id="PF02788">
    <property type="entry name" value="RuBisCO_large_N"/>
    <property type="match status" value="1"/>
</dbReference>
<dbReference type="SFLD" id="SFLDG01052">
    <property type="entry name" value="RuBisCO"/>
    <property type="match status" value="1"/>
</dbReference>
<dbReference type="SFLD" id="SFLDS00014">
    <property type="entry name" value="RuBisCO"/>
    <property type="match status" value="1"/>
</dbReference>
<dbReference type="SFLD" id="SFLDG00301">
    <property type="entry name" value="RuBisCO-like_proteins"/>
    <property type="match status" value="1"/>
</dbReference>
<dbReference type="SUPFAM" id="SSF51649">
    <property type="entry name" value="RuBisCo, C-terminal domain"/>
    <property type="match status" value="1"/>
</dbReference>
<dbReference type="SUPFAM" id="SSF54966">
    <property type="entry name" value="RuBisCO, large subunit, small (N-terminal) domain"/>
    <property type="match status" value="1"/>
</dbReference>
<dbReference type="PROSITE" id="PS00157">
    <property type="entry name" value="RUBISCO_LARGE"/>
    <property type="match status" value="1"/>
</dbReference>
<sequence>SVGFKAGVKDYKLTYYTPDYKTKDTDILAAFRVTPQPGVPPEEAGAAVAAESSTGTWTTVWTDGLTSLDRYKGRCYHIEPVAGEESQFIAYVAYPLDLFEEGSVTNMFTSIVGNVFGFKALRALRLEDLRIPNAYVKTFQGPPHGIQVERDKLNKYGRPLLGCTIKPKLGLSAKNYGRAVYECLRGGLDFTKDDENVNSQPFMRWRDRFLFCAEALYKAQAETGEIKGHYLNATAGTCEEMIKRAVFARELGVPIVMHDYLTGGFTANTSLSHYCRDNGLLLHIHRAMHAVIDRQKNHGMHFRVLAKALRLSGGDHIHSGTVVGKLEGEREITLGFVDLLRDDFVEKDRSRGIYFTQDWVSLPGVLPVASGGIHVWHMPALTEIFGDDSVLQFGGGTLGHPWGNAPGAVANRVALEACVQARNEGRDLASEGNQIIREASKWSPELAAACEVWKE</sequence>